<feature type="chain" id="PRO_0000088782" description="Chromatin modification-related protein EAF3">
    <location>
        <begin position="1"/>
        <end position="387"/>
    </location>
</feature>
<feature type="domain" description="Tudor-knot" evidence="2">
    <location>
        <begin position="100"/>
        <end position="126"/>
    </location>
</feature>
<feature type="domain" description="MRG" evidence="3">
    <location>
        <begin position="211"/>
        <end position="385"/>
    </location>
</feature>
<feature type="region of interest" description="Disordered" evidence="4">
    <location>
        <begin position="52"/>
        <end position="96"/>
    </location>
</feature>
<feature type="region of interest" description="Disordered" evidence="4">
    <location>
        <begin position="159"/>
        <end position="197"/>
    </location>
</feature>
<feature type="compositionally biased region" description="Basic and acidic residues" evidence="4">
    <location>
        <begin position="76"/>
        <end position="92"/>
    </location>
</feature>
<evidence type="ECO:0000250" key="1"/>
<evidence type="ECO:0000255" key="2"/>
<evidence type="ECO:0000255" key="3">
    <source>
        <dbReference type="PROSITE-ProRule" id="PRU00972"/>
    </source>
</evidence>
<evidence type="ECO:0000256" key="4">
    <source>
        <dbReference type="SAM" id="MobiDB-lite"/>
    </source>
</evidence>
<evidence type="ECO:0000305" key="5"/>
<keyword id="KW-0156">Chromatin regulator</keyword>
<keyword id="KW-0227">DNA damage</keyword>
<keyword id="KW-0234">DNA repair</keyword>
<keyword id="KW-0539">Nucleus</keyword>
<keyword id="KW-1185">Reference proteome</keyword>
<keyword id="KW-0804">Transcription</keyword>
<keyword id="KW-0805">Transcription regulation</keyword>
<accession>Q6C9M9</accession>
<gene>
    <name type="primary">EAF3</name>
    <name type="ordered locus">YALI0D09845g</name>
</gene>
<dbReference type="EMBL" id="CR382130">
    <property type="protein sequence ID" value="CAG80821.1"/>
    <property type="molecule type" value="Genomic_DNA"/>
</dbReference>
<dbReference type="RefSeq" id="XP_502633.1">
    <property type="nucleotide sequence ID" value="XM_502633.1"/>
</dbReference>
<dbReference type="SMR" id="Q6C9M9"/>
<dbReference type="FunCoup" id="Q6C9M9">
    <property type="interactions" value="694"/>
</dbReference>
<dbReference type="STRING" id="284591.Q6C9M9"/>
<dbReference type="EnsemblFungi" id="CAG80821">
    <property type="protein sequence ID" value="CAG80821"/>
    <property type="gene ID" value="YALI0_D09845g"/>
</dbReference>
<dbReference type="KEGG" id="yli:2910924"/>
<dbReference type="VEuPathDB" id="FungiDB:YALI0_D09845g"/>
<dbReference type="HOGENOM" id="CLU_039566_1_1_1"/>
<dbReference type="InParanoid" id="Q6C9M9"/>
<dbReference type="OMA" id="GLQTYFD"/>
<dbReference type="OrthoDB" id="94162at4891"/>
<dbReference type="Proteomes" id="UP000001300">
    <property type="component" value="Chromosome D"/>
</dbReference>
<dbReference type="GO" id="GO:0035267">
    <property type="term" value="C:NuA4 histone acetyltransferase complex"/>
    <property type="evidence" value="ECO:0000318"/>
    <property type="project" value="GO_Central"/>
</dbReference>
<dbReference type="GO" id="GO:0032221">
    <property type="term" value="C:Rpd3S complex"/>
    <property type="evidence" value="ECO:0000318"/>
    <property type="project" value="GO_Central"/>
</dbReference>
<dbReference type="GO" id="GO:0006338">
    <property type="term" value="P:chromatin remodeling"/>
    <property type="evidence" value="ECO:0007669"/>
    <property type="project" value="UniProtKB-ARBA"/>
</dbReference>
<dbReference type="GO" id="GO:0006281">
    <property type="term" value="P:DNA repair"/>
    <property type="evidence" value="ECO:0007669"/>
    <property type="project" value="UniProtKB-KW"/>
</dbReference>
<dbReference type="GO" id="GO:0006355">
    <property type="term" value="P:regulation of DNA-templated transcription"/>
    <property type="evidence" value="ECO:0007669"/>
    <property type="project" value="InterPro"/>
</dbReference>
<dbReference type="FunFam" id="1.10.274.30:FF:000004">
    <property type="entry name" value="Putative Chromatin modification-related protein eaf3"/>
    <property type="match status" value="1"/>
</dbReference>
<dbReference type="Gene3D" id="2.30.30.140">
    <property type="match status" value="1"/>
</dbReference>
<dbReference type="Gene3D" id="1.10.274.30">
    <property type="entry name" value="MRG domain"/>
    <property type="match status" value="1"/>
</dbReference>
<dbReference type="InterPro" id="IPR016197">
    <property type="entry name" value="Chromo-like_dom_sf"/>
</dbReference>
<dbReference type="InterPro" id="IPR000953">
    <property type="entry name" value="Chromo/chromo_shadow_dom"/>
</dbReference>
<dbReference type="InterPro" id="IPR008676">
    <property type="entry name" value="MRG"/>
</dbReference>
<dbReference type="InterPro" id="IPR038217">
    <property type="entry name" value="MRG_C_sf"/>
</dbReference>
<dbReference type="InterPro" id="IPR026541">
    <property type="entry name" value="MRG_dom"/>
</dbReference>
<dbReference type="InterPro" id="IPR053820">
    <property type="entry name" value="MSL3_chromo-like"/>
</dbReference>
<dbReference type="PANTHER" id="PTHR10880">
    <property type="entry name" value="MORTALITY FACTOR 4-LIKE PROTEIN"/>
    <property type="match status" value="1"/>
</dbReference>
<dbReference type="PANTHER" id="PTHR10880:SF15">
    <property type="entry name" value="MSL COMPLEX SUBUNIT 3"/>
    <property type="match status" value="1"/>
</dbReference>
<dbReference type="Pfam" id="PF05712">
    <property type="entry name" value="MRG"/>
    <property type="match status" value="1"/>
</dbReference>
<dbReference type="Pfam" id="PF22732">
    <property type="entry name" value="MSL3_chromo-like"/>
    <property type="match status" value="1"/>
</dbReference>
<dbReference type="SMART" id="SM00298">
    <property type="entry name" value="CHROMO"/>
    <property type="match status" value="1"/>
</dbReference>
<dbReference type="SUPFAM" id="SSF54160">
    <property type="entry name" value="Chromo domain-like"/>
    <property type="match status" value="1"/>
</dbReference>
<dbReference type="PROSITE" id="PS51640">
    <property type="entry name" value="MRG"/>
    <property type="match status" value="1"/>
</dbReference>
<reference key="1">
    <citation type="journal article" date="2004" name="Nature">
        <title>Genome evolution in yeasts.</title>
        <authorList>
            <person name="Dujon B."/>
            <person name="Sherman D."/>
            <person name="Fischer G."/>
            <person name="Durrens P."/>
            <person name="Casaregola S."/>
            <person name="Lafontaine I."/>
            <person name="de Montigny J."/>
            <person name="Marck C."/>
            <person name="Neuveglise C."/>
            <person name="Talla E."/>
            <person name="Goffard N."/>
            <person name="Frangeul L."/>
            <person name="Aigle M."/>
            <person name="Anthouard V."/>
            <person name="Babour A."/>
            <person name="Barbe V."/>
            <person name="Barnay S."/>
            <person name="Blanchin S."/>
            <person name="Beckerich J.-M."/>
            <person name="Beyne E."/>
            <person name="Bleykasten C."/>
            <person name="Boisrame A."/>
            <person name="Boyer J."/>
            <person name="Cattolico L."/>
            <person name="Confanioleri F."/>
            <person name="de Daruvar A."/>
            <person name="Despons L."/>
            <person name="Fabre E."/>
            <person name="Fairhead C."/>
            <person name="Ferry-Dumazet H."/>
            <person name="Groppi A."/>
            <person name="Hantraye F."/>
            <person name="Hennequin C."/>
            <person name="Jauniaux N."/>
            <person name="Joyet P."/>
            <person name="Kachouri R."/>
            <person name="Kerrest A."/>
            <person name="Koszul R."/>
            <person name="Lemaire M."/>
            <person name="Lesur I."/>
            <person name="Ma L."/>
            <person name="Muller H."/>
            <person name="Nicaud J.-M."/>
            <person name="Nikolski M."/>
            <person name="Oztas S."/>
            <person name="Ozier-Kalogeropoulos O."/>
            <person name="Pellenz S."/>
            <person name="Potier S."/>
            <person name="Richard G.-F."/>
            <person name="Straub M.-L."/>
            <person name="Suleau A."/>
            <person name="Swennen D."/>
            <person name="Tekaia F."/>
            <person name="Wesolowski-Louvel M."/>
            <person name="Westhof E."/>
            <person name="Wirth B."/>
            <person name="Zeniou-Meyer M."/>
            <person name="Zivanovic Y."/>
            <person name="Bolotin-Fukuhara M."/>
            <person name="Thierry A."/>
            <person name="Bouchier C."/>
            <person name="Caudron B."/>
            <person name="Scarpelli C."/>
            <person name="Gaillardin C."/>
            <person name="Weissenbach J."/>
            <person name="Wincker P."/>
            <person name="Souciet J.-L."/>
        </authorList>
    </citation>
    <scope>NUCLEOTIDE SEQUENCE [LARGE SCALE GENOMIC DNA]</scope>
    <source>
        <strain>CLIB 122 / E 150</strain>
    </source>
</reference>
<protein>
    <recommendedName>
        <fullName>Chromatin modification-related protein EAF3</fullName>
    </recommendedName>
</protein>
<name>EAF3_YARLI</name>
<sequence>MVLATNSRCLAYHGPLLYEAKILMSYDPSKRGSKAKVEDGLPPTVEIGNVVNTHKRKRGPRASLPAAGATPDGDDSNDKNRHFSPKEGKPDVPADLADENEDKICYYVHYKGWKNTWDEWVGEERVLALNEDNIKLQKELKAAALAAAKKGKDFDALAPPEALSETASPAPTTKRKSMASKDSPAEGPRPVKRRGGLAALEDLEKEDDYLKRKEIALVVPDKLKAQLVDDWEFVTKDHQLVGLPRKVTVVDILKEFKKEAEAKYRPGSADADILNEVVSGIKLYFDRSLGSILLYRFEREQYLQITQSPDHSNKTMSEVYGAEHLLRLFVSLPGLIAMTNMDAQSVAVLKEHLEDFVRFLSTHQKTYFLKEAYTNASPAYEALSKGL</sequence>
<proteinExistence type="inferred from homology"/>
<comment type="function">
    <text evidence="1">Involved in deacetylation of histones, chromatin assembly and chromosome segregation. May act as a transcriptional oscillator, directing histone deacetylases to specific chromosomal domains. Component of the NuA4 histone acetyltransferase complex which is involved in transcriptional activation of selected genes principally by acetylation of nucleosomal histone H4 and H2A. The NuA4 complex is also involved in DNA repair (By similarity).</text>
</comment>
<comment type="subunit">
    <text evidence="1">Component of the NuA4 histone acetyltransferase complex.</text>
</comment>
<comment type="subcellular location">
    <subcellularLocation>
        <location evidence="3">Nucleus</location>
    </subcellularLocation>
</comment>
<comment type="similarity">
    <text evidence="5">Belongs to the MRG family.</text>
</comment>
<organism>
    <name type="scientific">Yarrowia lipolytica (strain CLIB 122 / E 150)</name>
    <name type="common">Yeast</name>
    <name type="synonym">Candida lipolytica</name>
    <dbReference type="NCBI Taxonomy" id="284591"/>
    <lineage>
        <taxon>Eukaryota</taxon>
        <taxon>Fungi</taxon>
        <taxon>Dikarya</taxon>
        <taxon>Ascomycota</taxon>
        <taxon>Saccharomycotina</taxon>
        <taxon>Dipodascomycetes</taxon>
        <taxon>Dipodascales</taxon>
        <taxon>Dipodascales incertae sedis</taxon>
        <taxon>Yarrowia</taxon>
    </lineage>
</organism>